<accession>Q3C2C1</accession>
<sequence>MKTFLILAMAVALAKAQSTDEITNLVQFGKLVMCLGNIGYTEGLEYDGYGCFCGKGGKGTPVDATDRCCEVHDNCYGQAVEEGKCWSVETYGTTYWYDQSTSGSCSIRCWEEGDYNSLVPRKACKAAICECDRKAAQCFADNRPTFNRKYLNYAKDTC</sequence>
<organism>
    <name type="scientific">Acanthaster planci</name>
    <name type="common">Crown-of-thorns starfish</name>
    <dbReference type="NCBI Taxonomy" id="133434"/>
    <lineage>
        <taxon>Eukaryota</taxon>
        <taxon>Metazoa</taxon>
        <taxon>Echinodermata</taxon>
        <taxon>Eleutherozoa</taxon>
        <taxon>Asterozoa</taxon>
        <taxon>Asteroidea</taxon>
        <taxon>Valvatacea</taxon>
        <taxon>Valvatida</taxon>
        <taxon>Acanthasteridae</taxon>
        <taxon>Acanthaster</taxon>
    </lineage>
</organism>
<dbReference type="EC" id="3.1.1.4"/>
<dbReference type="EMBL" id="AB211368">
    <property type="protein sequence ID" value="BAE46766.1"/>
    <property type="molecule type" value="mRNA"/>
</dbReference>
<dbReference type="SMR" id="Q3C2C1"/>
<dbReference type="OrthoDB" id="5841574at2759"/>
<dbReference type="Proteomes" id="UP000694845">
    <property type="component" value="Unplaced"/>
</dbReference>
<dbReference type="GO" id="GO:0005576">
    <property type="term" value="C:extracellular region"/>
    <property type="evidence" value="ECO:0007669"/>
    <property type="project" value="UniProtKB-SubCell"/>
</dbReference>
<dbReference type="GO" id="GO:0005509">
    <property type="term" value="F:calcium ion binding"/>
    <property type="evidence" value="ECO:0007669"/>
    <property type="project" value="InterPro"/>
</dbReference>
<dbReference type="GO" id="GO:0047498">
    <property type="term" value="F:calcium-dependent phospholipase A2 activity"/>
    <property type="evidence" value="ECO:0007669"/>
    <property type="project" value="TreeGrafter"/>
</dbReference>
<dbReference type="GO" id="GO:0005543">
    <property type="term" value="F:phospholipid binding"/>
    <property type="evidence" value="ECO:0007669"/>
    <property type="project" value="TreeGrafter"/>
</dbReference>
<dbReference type="GO" id="GO:0090729">
    <property type="term" value="F:toxin activity"/>
    <property type="evidence" value="ECO:0007669"/>
    <property type="project" value="UniProtKB-KW"/>
</dbReference>
<dbReference type="GO" id="GO:0050482">
    <property type="term" value="P:arachidonate secretion"/>
    <property type="evidence" value="ECO:0007669"/>
    <property type="project" value="InterPro"/>
</dbReference>
<dbReference type="GO" id="GO:0031640">
    <property type="term" value="P:killing of cells of another organism"/>
    <property type="evidence" value="ECO:0007669"/>
    <property type="project" value="UniProtKB-KW"/>
</dbReference>
<dbReference type="GO" id="GO:0016042">
    <property type="term" value="P:lipid catabolic process"/>
    <property type="evidence" value="ECO:0007669"/>
    <property type="project" value="UniProtKB-KW"/>
</dbReference>
<dbReference type="GO" id="GO:0006644">
    <property type="term" value="P:phospholipid metabolic process"/>
    <property type="evidence" value="ECO:0007669"/>
    <property type="project" value="InterPro"/>
</dbReference>
<dbReference type="CDD" id="cd00125">
    <property type="entry name" value="PLA2c"/>
    <property type="match status" value="1"/>
</dbReference>
<dbReference type="Gene3D" id="1.20.90.10">
    <property type="entry name" value="Phospholipase A2 domain"/>
    <property type="match status" value="1"/>
</dbReference>
<dbReference type="InterPro" id="IPR001211">
    <property type="entry name" value="PLipase_A2"/>
</dbReference>
<dbReference type="InterPro" id="IPR016090">
    <property type="entry name" value="PLipase_A2_dom"/>
</dbReference>
<dbReference type="InterPro" id="IPR036444">
    <property type="entry name" value="PLipase_A2_dom_sf"/>
</dbReference>
<dbReference type="InterPro" id="IPR033113">
    <property type="entry name" value="PLipase_A2_His_AS"/>
</dbReference>
<dbReference type="PANTHER" id="PTHR11716:SF51">
    <property type="entry name" value="PHOSPHOLIPASE A2"/>
    <property type="match status" value="1"/>
</dbReference>
<dbReference type="PANTHER" id="PTHR11716">
    <property type="entry name" value="PHOSPHOLIPASE A2 FAMILY MEMBER"/>
    <property type="match status" value="1"/>
</dbReference>
<dbReference type="Pfam" id="PF00068">
    <property type="entry name" value="Phospholip_A2_1"/>
    <property type="match status" value="1"/>
</dbReference>
<dbReference type="PRINTS" id="PR00389">
    <property type="entry name" value="PHPHLIPASEA2"/>
</dbReference>
<dbReference type="SMART" id="SM00085">
    <property type="entry name" value="PA2c"/>
    <property type="match status" value="1"/>
</dbReference>
<dbReference type="SUPFAM" id="SSF48619">
    <property type="entry name" value="Phospholipase A2, PLA2"/>
    <property type="match status" value="1"/>
</dbReference>
<dbReference type="PROSITE" id="PS00118">
    <property type="entry name" value="PA2_HIS"/>
    <property type="match status" value="1"/>
</dbReference>
<feature type="signal peptide" evidence="2">
    <location>
        <begin position="1"/>
        <end position="16"/>
    </location>
</feature>
<feature type="propeptide" id="PRO_0000272035" evidence="4">
    <location>
        <begin position="17"/>
        <end position="23"/>
    </location>
</feature>
<feature type="chain" id="PRO_0000272036" description="Phospholipase A2 AP-PLA2-II">
    <location>
        <begin position="24"/>
        <end position="158"/>
    </location>
</feature>
<feature type="active site" evidence="3">
    <location>
        <position position="72"/>
    </location>
</feature>
<feature type="active site" evidence="3">
    <location>
        <position position="132"/>
    </location>
</feature>
<feature type="binding site" evidence="1">
    <location>
        <position position="54"/>
    </location>
    <ligand>
        <name>Ca(2+)</name>
        <dbReference type="ChEBI" id="CHEBI:29108"/>
    </ligand>
</feature>
<feature type="binding site" evidence="1">
    <location>
        <position position="56"/>
    </location>
    <ligand>
        <name>Ca(2+)</name>
        <dbReference type="ChEBI" id="CHEBI:29108"/>
    </ligand>
</feature>
<feature type="binding site" evidence="1">
    <location>
        <position position="73"/>
    </location>
    <ligand>
        <name>Ca(2+)</name>
        <dbReference type="ChEBI" id="CHEBI:29108"/>
    </ligand>
</feature>
<feature type="disulfide bond" evidence="1">
    <location>
        <begin position="51"/>
        <end position="158"/>
    </location>
</feature>
<feature type="disulfide bond" evidence="1">
    <location>
        <begin position="53"/>
        <end position="69"/>
    </location>
</feature>
<feature type="disulfide bond" evidence="1">
    <location>
        <begin position="68"/>
        <end position="138"/>
    </location>
</feature>
<feature type="disulfide bond" evidence="1">
    <location>
        <begin position="75"/>
        <end position="131"/>
    </location>
</feature>
<feature type="disulfide bond" evidence="1">
    <location>
        <begin position="85"/>
        <end position="124"/>
    </location>
</feature>
<feature type="disulfide bond" evidence="1">
    <location>
        <begin position="109"/>
        <end position="129"/>
    </location>
</feature>
<feature type="sequence conflict" description="In Ref. 2; AA sequence." evidence="5" ref="2">
    <original>K</original>
    <variation>N</variation>
    <location>
        <position position="30"/>
    </location>
</feature>
<feature type="sequence conflict" description="In Ref. 2; AA sequence." evidence="5" ref="2">
    <original>T</original>
    <variation>L</variation>
    <location>
        <position position="65"/>
    </location>
</feature>
<keyword id="KW-0106">Calcium</keyword>
<keyword id="KW-0204">Cytolysis</keyword>
<keyword id="KW-0903">Direct protein sequencing</keyword>
<keyword id="KW-1015">Disulfide bond</keyword>
<keyword id="KW-0354">Hemolysis</keyword>
<keyword id="KW-1200">Hemorrhagic toxin</keyword>
<keyword id="KW-1199">Hemostasis impairing toxin</keyword>
<keyword id="KW-0378">Hydrolase</keyword>
<keyword id="KW-0442">Lipid degradation</keyword>
<keyword id="KW-0443">Lipid metabolism</keyword>
<keyword id="KW-0479">Metal-binding</keyword>
<keyword id="KW-1185">Reference proteome</keyword>
<keyword id="KW-0964">Secreted</keyword>
<keyword id="KW-0732">Signal</keyword>
<keyword id="KW-0800">Toxin</keyword>
<reference key="1">
    <citation type="journal article" date="2006" name="Comp. Biochem. Physiol.">
        <title>Molecular cloning of two toxic phospholipases A2 from the crown-of-thorns starfish Acanthaster planci venom.</title>
        <authorList>
            <person name="Ota E."/>
            <person name="Nagai H."/>
            <person name="Nagashima Y."/>
            <person name="Shiomi K."/>
        </authorList>
    </citation>
    <scope>NUCLEOTIDE SEQUENCE [MRNA]</scope>
    <scope>PROTEIN SEQUENCE OF 131-158</scope>
</reference>
<reference key="2">
    <citation type="journal article" date="1998" name="Toxicon">
        <title>Purification and properties of phospholipases A2 from the crown-of-thorns starfish (Acanthaster planci) venom.</title>
        <authorList>
            <person name="Shiomi K.A."/>
            <person name="Kazama A."/>
            <person name="Shimakura K."/>
            <person name="Nagashima Y."/>
        </authorList>
    </citation>
    <scope>PROTEIN SEQUENCE OF 24-85</scope>
    <scope>FUNCTION</scope>
    <source>
        <tissue>Spine</tissue>
    </source>
</reference>
<name>PA22_ACAPL</name>
<protein>
    <recommendedName>
        <fullName>Phospholipase A2 AP-PLA2-II</fullName>
        <shortName>PLA2</shortName>
        <ecNumber>3.1.1.4</ecNumber>
    </recommendedName>
    <alternativeName>
        <fullName>Phosphatidylcholine 2-acylhydrolase 2</fullName>
    </alternativeName>
</protein>
<comment type="function">
    <text evidence="4">Starfish phospholipase A2 (PLA2) that has hemorrhagic and capillary permeability-increasing activities and hence is considered to be deeply involved in the local inflammation. Shows hemolytic activity only in the presence of phosphatidylcholine (PC). PLA2 catalyzes the calcium-dependent hydrolysis of the 2-acyl groups in 3-sn-phosphoglycerides.</text>
</comment>
<comment type="catalytic activity">
    <reaction evidence="3">
        <text>a 1,2-diacyl-sn-glycero-3-phosphocholine + H2O = a 1-acyl-sn-glycero-3-phosphocholine + a fatty acid + H(+)</text>
        <dbReference type="Rhea" id="RHEA:15801"/>
        <dbReference type="ChEBI" id="CHEBI:15377"/>
        <dbReference type="ChEBI" id="CHEBI:15378"/>
        <dbReference type="ChEBI" id="CHEBI:28868"/>
        <dbReference type="ChEBI" id="CHEBI:57643"/>
        <dbReference type="ChEBI" id="CHEBI:58168"/>
        <dbReference type="EC" id="3.1.1.4"/>
    </reaction>
</comment>
<comment type="cofactor">
    <cofactor evidence="1">
        <name>Ca(2+)</name>
        <dbReference type="ChEBI" id="CHEBI:29108"/>
    </cofactor>
    <text evidence="1">Binds 1 Ca(2+) ion per subunit.</text>
</comment>
<comment type="subunit">
    <text>Monomer.</text>
</comment>
<comment type="subcellular location">
    <subcellularLocation>
        <location>Secreted</location>
    </subcellularLocation>
</comment>
<comment type="tissue specificity">
    <text>Expressed by the venom gland.</text>
</comment>
<comment type="similarity">
    <text evidence="5">Belongs to the phospholipase A2 family. Group I subfamily.</text>
</comment>
<proteinExistence type="evidence at protein level"/>
<evidence type="ECO:0000250" key="1"/>
<evidence type="ECO:0000255" key="2"/>
<evidence type="ECO:0000255" key="3">
    <source>
        <dbReference type="PROSITE-ProRule" id="PRU10035"/>
    </source>
</evidence>
<evidence type="ECO:0000269" key="4">
    <source>
    </source>
</evidence>
<evidence type="ECO:0000305" key="5"/>